<gene>
    <name evidence="1" type="primary">petN</name>
    <name type="ordered locus">sync_1422</name>
</gene>
<evidence type="ECO:0000255" key="1">
    <source>
        <dbReference type="HAMAP-Rule" id="MF_00395"/>
    </source>
</evidence>
<sequence length="33" mass="3594">MLFTIAWASLAAVFSFSIAMVVWGRNGDGTLNF</sequence>
<proteinExistence type="inferred from homology"/>
<protein>
    <recommendedName>
        <fullName evidence="1">Cytochrome b6-f complex subunit 8</fullName>
    </recommendedName>
    <alternativeName>
        <fullName evidence="1">Cytochrome b6-f complex subunit PetN</fullName>
    </alternativeName>
    <alternativeName>
        <fullName evidence="1">Cytochrome b6-f complex subunit VIII</fullName>
    </alternativeName>
</protein>
<name>PETN_SYNS3</name>
<organism>
    <name type="scientific">Synechococcus sp. (strain CC9311)</name>
    <dbReference type="NCBI Taxonomy" id="64471"/>
    <lineage>
        <taxon>Bacteria</taxon>
        <taxon>Bacillati</taxon>
        <taxon>Cyanobacteriota</taxon>
        <taxon>Cyanophyceae</taxon>
        <taxon>Synechococcales</taxon>
        <taxon>Synechococcaceae</taxon>
        <taxon>Synechococcus</taxon>
    </lineage>
</organism>
<accession>Q0IA94</accession>
<comment type="function">
    <text evidence="1">Component of the cytochrome b6-f complex, which mediates electron transfer between photosystem II (PSII) and photosystem I (PSI), cyclic electron flow around PSI, and state transitions.</text>
</comment>
<comment type="subunit">
    <text evidence="1">The 4 large subunits of the cytochrome b6-f complex are cytochrome b6, subunit IV (17 kDa polypeptide, PetD), cytochrome f and the Rieske protein, while the 4 small subunits are PetG, PetL, PetM and PetN. The complex functions as a dimer.</text>
</comment>
<comment type="subcellular location">
    <subcellularLocation>
        <location evidence="1">Cellular thylakoid membrane</location>
        <topology evidence="1">Single-pass membrane protein</topology>
    </subcellularLocation>
</comment>
<comment type="similarity">
    <text evidence="1">Belongs to the PetN family.</text>
</comment>
<reference key="1">
    <citation type="journal article" date="2006" name="Proc. Natl. Acad. Sci. U.S.A.">
        <title>Genome sequence of Synechococcus CC9311: insights into adaptation to a coastal environment.</title>
        <authorList>
            <person name="Palenik B."/>
            <person name="Ren Q."/>
            <person name="Dupont C.L."/>
            <person name="Myers G.S."/>
            <person name="Heidelberg J.F."/>
            <person name="Badger J.H."/>
            <person name="Madupu R."/>
            <person name="Nelson W.C."/>
            <person name="Brinkac L.M."/>
            <person name="Dodson R.J."/>
            <person name="Durkin A.S."/>
            <person name="Daugherty S.C."/>
            <person name="Sullivan S.A."/>
            <person name="Khouri H."/>
            <person name="Mohamoud Y."/>
            <person name="Halpin R."/>
            <person name="Paulsen I.T."/>
        </authorList>
    </citation>
    <scope>NUCLEOTIDE SEQUENCE [LARGE SCALE GENOMIC DNA]</scope>
    <source>
        <strain>CC9311</strain>
    </source>
</reference>
<dbReference type="EMBL" id="CP000435">
    <property type="protein sequence ID" value="ABI45106.1"/>
    <property type="molecule type" value="Genomic_DNA"/>
</dbReference>
<dbReference type="RefSeq" id="WP_011619345.1">
    <property type="nucleotide sequence ID" value="NC_008319.1"/>
</dbReference>
<dbReference type="SMR" id="Q0IA94"/>
<dbReference type="STRING" id="64471.sync_1422"/>
<dbReference type="KEGG" id="syg:sync_1422"/>
<dbReference type="eggNOG" id="ENOG502ZT1J">
    <property type="taxonomic scope" value="Bacteria"/>
</dbReference>
<dbReference type="HOGENOM" id="CLU_215774_0_0_3"/>
<dbReference type="OrthoDB" id="560308at2"/>
<dbReference type="Proteomes" id="UP000001961">
    <property type="component" value="Chromosome"/>
</dbReference>
<dbReference type="GO" id="GO:0009512">
    <property type="term" value="C:cytochrome b6f complex"/>
    <property type="evidence" value="ECO:0007669"/>
    <property type="project" value="InterPro"/>
</dbReference>
<dbReference type="GO" id="GO:0031676">
    <property type="term" value="C:plasma membrane-derived thylakoid membrane"/>
    <property type="evidence" value="ECO:0007669"/>
    <property type="project" value="UniProtKB-SubCell"/>
</dbReference>
<dbReference type="GO" id="GO:0045158">
    <property type="term" value="F:electron transporter, transferring electrons within cytochrome b6/f complex of photosystem II activity"/>
    <property type="evidence" value="ECO:0007669"/>
    <property type="project" value="InterPro"/>
</dbReference>
<dbReference type="GO" id="GO:0017004">
    <property type="term" value="P:cytochrome complex assembly"/>
    <property type="evidence" value="ECO:0007669"/>
    <property type="project" value="UniProtKB-UniRule"/>
</dbReference>
<dbReference type="GO" id="GO:0015979">
    <property type="term" value="P:photosynthesis"/>
    <property type="evidence" value="ECO:0007669"/>
    <property type="project" value="UniProtKB-KW"/>
</dbReference>
<dbReference type="HAMAP" id="MF_00395">
    <property type="entry name" value="Cytb6_f_PetN"/>
    <property type="match status" value="1"/>
</dbReference>
<dbReference type="InterPro" id="IPR036143">
    <property type="entry name" value="Cytochr_b6-f_cplx_su8_sf"/>
</dbReference>
<dbReference type="InterPro" id="IPR005497">
    <property type="entry name" value="Cytochrome_b6-f_cplx_su8"/>
</dbReference>
<dbReference type="NCBIfam" id="NF002709">
    <property type="entry name" value="PRK02529.1"/>
    <property type="match status" value="1"/>
</dbReference>
<dbReference type="Pfam" id="PF03742">
    <property type="entry name" value="PetN"/>
    <property type="match status" value="1"/>
</dbReference>
<dbReference type="SUPFAM" id="SSF103451">
    <property type="entry name" value="PetN subunit of the cytochrome b6f complex"/>
    <property type="match status" value="1"/>
</dbReference>
<feature type="chain" id="PRO_1000049582" description="Cytochrome b6-f complex subunit 8">
    <location>
        <begin position="1"/>
        <end position="33"/>
    </location>
</feature>
<feature type="transmembrane region" description="Helical" evidence="1">
    <location>
        <begin position="2"/>
        <end position="22"/>
    </location>
</feature>
<keyword id="KW-0249">Electron transport</keyword>
<keyword id="KW-0472">Membrane</keyword>
<keyword id="KW-0602">Photosynthesis</keyword>
<keyword id="KW-1185">Reference proteome</keyword>
<keyword id="KW-0793">Thylakoid</keyword>
<keyword id="KW-0812">Transmembrane</keyword>
<keyword id="KW-1133">Transmembrane helix</keyword>
<keyword id="KW-0813">Transport</keyword>